<proteinExistence type="uncertain"/>
<gene>
    <name type="ordered locus">HI_1343</name>
</gene>
<sequence length="238" mass="26720">MRVAILRITERSWEINTMLPWKSSKKFSNHSIASTSKWLVHQVANFVTWHETAKKCGAKIRVLPILDNWLIDENVLISTLSEKTKLVALNFVSNVTGTEQPIKRLIQLIRKHSHALVLVDAAQAISHIKIDLQDLDADFLAFSAHKIYGPNGLGVLTGKLTALSQLQPLFFGGKMVERVSNNRITFAELPYRLEAGTPNIAGVIGFNAVLDWLQKWDFTAAEQHAISLAESVKVRRNF</sequence>
<organism>
    <name type="scientific">Haemophilus influenzae (strain ATCC 51907 / DSM 11121 / KW20 / Rd)</name>
    <dbReference type="NCBI Taxonomy" id="71421"/>
    <lineage>
        <taxon>Bacteria</taxon>
        <taxon>Pseudomonadati</taxon>
        <taxon>Pseudomonadota</taxon>
        <taxon>Gammaproteobacteria</taxon>
        <taxon>Pasteurellales</taxon>
        <taxon>Pasteurellaceae</taxon>
        <taxon>Haemophilus</taxon>
    </lineage>
</organism>
<accession>P71379</accession>
<keyword id="KW-0663">Pyridoxal phosphate</keyword>
<keyword id="KW-1185">Reference proteome</keyword>
<reference key="1">
    <citation type="journal article" date="1995" name="Science">
        <title>Whole-genome random sequencing and assembly of Haemophilus influenzae Rd.</title>
        <authorList>
            <person name="Fleischmann R.D."/>
            <person name="Adams M.D."/>
            <person name="White O."/>
            <person name="Clayton R.A."/>
            <person name="Kirkness E.F."/>
            <person name="Kerlavage A.R."/>
            <person name="Bult C.J."/>
            <person name="Tomb J.-F."/>
            <person name="Dougherty B.A."/>
            <person name="Merrick J.M."/>
            <person name="McKenney K."/>
            <person name="Sutton G.G."/>
            <person name="FitzHugh W."/>
            <person name="Fields C.A."/>
            <person name="Gocayne J.D."/>
            <person name="Scott J.D."/>
            <person name="Shirley R."/>
            <person name="Liu L.-I."/>
            <person name="Glodek A."/>
            <person name="Kelley J.M."/>
            <person name="Weidman J.F."/>
            <person name="Phillips C.A."/>
            <person name="Spriggs T."/>
            <person name="Hedblom E."/>
            <person name="Cotton M.D."/>
            <person name="Utterback T.R."/>
            <person name="Hanna M.C."/>
            <person name="Nguyen D.T."/>
            <person name="Saudek D.M."/>
            <person name="Brandon R.C."/>
            <person name="Fine L.D."/>
            <person name="Fritchman J.L."/>
            <person name="Fuhrmann J.L."/>
            <person name="Geoghagen N.S.M."/>
            <person name="Gnehm C.L."/>
            <person name="McDonald L.A."/>
            <person name="Small K.V."/>
            <person name="Fraser C.M."/>
            <person name="Smith H.O."/>
            <person name="Venter J.C."/>
        </authorList>
    </citation>
    <scope>NUCLEOTIDE SEQUENCE [LARGE SCALE GENOMIC DNA]</scope>
    <source>
        <strain>ATCC 51907 / DSM 11121 / KW20 / Rd</strain>
    </source>
</reference>
<feature type="chain" id="PRO_0000150340" description="Putative csd-like protein HI_1343">
    <location>
        <begin position="1"/>
        <end position="238"/>
    </location>
</feature>
<feature type="modified residue" description="N6-(pyridoxal phosphate)lysine" evidence="1">
    <location>
        <position position="146"/>
    </location>
</feature>
<name>Y1343_HAEIN</name>
<protein>
    <recommendedName>
        <fullName>Putative csd-like protein HI_1343</fullName>
    </recommendedName>
</protein>
<comment type="similarity">
    <text evidence="2">Belongs to the class-V pyridoxal-phosphate-dependent aminotransferase family. Csd subfamily.</text>
</comment>
<comment type="caution">
    <text evidence="2">Could be the product of a pseudogene. This protein seems to be a truncated duplicated copy of csd/HI_1295. It is encoded at the border of a duplicated DNA segment and is therefore probably non-functional.</text>
</comment>
<dbReference type="EMBL" id="L42023">
    <property type="protein sequence ID" value="AAC22994.1"/>
    <property type="molecule type" value="Genomic_DNA"/>
</dbReference>
<dbReference type="PIR" id="G64117">
    <property type="entry name" value="G64117"/>
</dbReference>
<dbReference type="RefSeq" id="NP_439493.1">
    <property type="nucleotide sequence ID" value="NC_000907.1"/>
</dbReference>
<dbReference type="SMR" id="P71379"/>
<dbReference type="STRING" id="71421.HI_1343"/>
<dbReference type="EnsemblBacteria" id="AAC22994">
    <property type="protein sequence ID" value="AAC22994"/>
    <property type="gene ID" value="HI_1343"/>
</dbReference>
<dbReference type="KEGG" id="hin:HI_1343"/>
<dbReference type="PATRIC" id="fig|71421.8.peg.1394"/>
<dbReference type="eggNOG" id="COG0520">
    <property type="taxonomic scope" value="Bacteria"/>
</dbReference>
<dbReference type="HOGENOM" id="CLU_1164585_0_0_6"/>
<dbReference type="OrthoDB" id="9808002at2"/>
<dbReference type="PhylomeDB" id="P71379"/>
<dbReference type="BioCyc" id="HINF71421:G1GJ1-1367-MONOMER"/>
<dbReference type="Proteomes" id="UP000000579">
    <property type="component" value="Chromosome"/>
</dbReference>
<dbReference type="Gene3D" id="3.40.640.10">
    <property type="entry name" value="Type I PLP-dependent aspartate aminotransferase-like (Major domain)"/>
    <property type="match status" value="1"/>
</dbReference>
<dbReference type="InterPro" id="IPR000192">
    <property type="entry name" value="Aminotrans_V_dom"/>
</dbReference>
<dbReference type="InterPro" id="IPR015424">
    <property type="entry name" value="PyrdxlP-dep_Trfase"/>
</dbReference>
<dbReference type="InterPro" id="IPR015421">
    <property type="entry name" value="PyrdxlP-dep_Trfase_major"/>
</dbReference>
<dbReference type="PANTHER" id="PTHR43586">
    <property type="entry name" value="CYSTEINE DESULFURASE"/>
    <property type="match status" value="1"/>
</dbReference>
<dbReference type="PANTHER" id="PTHR43586:SF8">
    <property type="entry name" value="CYSTEINE DESULFURASE 1, CHLOROPLASTIC"/>
    <property type="match status" value="1"/>
</dbReference>
<dbReference type="Pfam" id="PF00266">
    <property type="entry name" value="Aminotran_5"/>
    <property type="match status" value="1"/>
</dbReference>
<dbReference type="SUPFAM" id="SSF53383">
    <property type="entry name" value="PLP-dependent transferases"/>
    <property type="match status" value="1"/>
</dbReference>
<evidence type="ECO:0000250" key="1"/>
<evidence type="ECO:0000305" key="2"/>